<accession>Q90399</accession>
<dbReference type="EMBL" id="U31356">
    <property type="protein sequence ID" value="AAC59752.1"/>
    <property type="molecule type" value="Genomic_DNA"/>
</dbReference>
<dbReference type="SMR" id="Q90399"/>
<dbReference type="GlyCosmos" id="Q90399">
    <property type="glycosylation" value="2 sites, No reported glycans"/>
</dbReference>
<dbReference type="GO" id="GO:0005576">
    <property type="term" value="C:extracellular region"/>
    <property type="evidence" value="ECO:0007669"/>
    <property type="project" value="UniProtKB-SubCell"/>
</dbReference>
<dbReference type="GO" id="GO:0005764">
    <property type="term" value="C:lysosome"/>
    <property type="evidence" value="ECO:0007669"/>
    <property type="project" value="TreeGrafter"/>
</dbReference>
<dbReference type="GO" id="GO:0005509">
    <property type="term" value="F:calcium ion binding"/>
    <property type="evidence" value="ECO:0007669"/>
    <property type="project" value="InterPro"/>
</dbReference>
<dbReference type="GO" id="GO:0007160">
    <property type="term" value="P:cell-matrix adhesion"/>
    <property type="evidence" value="ECO:0007669"/>
    <property type="project" value="InterPro"/>
</dbReference>
<dbReference type="InterPro" id="IPR001299">
    <property type="entry name" value="Ependymin"/>
</dbReference>
<dbReference type="InterPro" id="IPR018224">
    <property type="entry name" value="Ependymin_CS"/>
</dbReference>
<dbReference type="PANTHER" id="PTHR10697:SF5">
    <property type="entry name" value="EPENDYMIN-RELATED"/>
    <property type="match status" value="1"/>
</dbReference>
<dbReference type="PANTHER" id="PTHR10697">
    <property type="entry name" value="MAMMALIAN EPENDYMIN-RELATED PROTEIN 1"/>
    <property type="match status" value="1"/>
</dbReference>
<dbReference type="Pfam" id="PF00811">
    <property type="entry name" value="Ependymin"/>
    <property type="match status" value="1"/>
</dbReference>
<dbReference type="PRINTS" id="PR00317">
    <property type="entry name" value="EPENDYMIN"/>
</dbReference>
<dbReference type="SMART" id="SM00026">
    <property type="entry name" value="EPEND"/>
    <property type="match status" value="1"/>
</dbReference>
<dbReference type="PROSITE" id="PS00898">
    <property type="entry name" value="EPENDYMIN_1"/>
    <property type="match status" value="1"/>
</dbReference>
<dbReference type="PROSITE" id="PS00899">
    <property type="entry name" value="EPENDYMIN_2"/>
    <property type="match status" value="1"/>
</dbReference>
<comment type="function">
    <text evidence="1">May play a role in neural plasticity. May be involved during axon regeneration (By similarity).</text>
</comment>
<comment type="subunit">
    <text evidence="1">Forms disulfide-linked dimers.</text>
</comment>
<comment type="subcellular location">
    <subcellularLocation>
        <location>Secreted</location>
    </subcellularLocation>
</comment>
<comment type="PTM">
    <text evidence="1">Binds calcium through the terminal sialic acids.</text>
</comment>
<comment type="similarity">
    <text evidence="3">Belongs to the ependymin family.</text>
</comment>
<keyword id="KW-0106">Calcium</keyword>
<keyword id="KW-1015">Disulfide bond</keyword>
<keyword id="KW-0325">Glycoprotein</keyword>
<keyword id="KW-0964">Secreted</keyword>
<keyword id="KW-0732">Signal</keyword>
<name>EPD_DEVAE</name>
<organism>
    <name type="scientific">Devario aequipinnatus</name>
    <name type="common">Giant danio</name>
    <name type="synonym">Danio aequipinnatus</name>
    <dbReference type="NCBI Taxonomy" id="46778"/>
    <lineage>
        <taxon>Eukaryota</taxon>
        <taxon>Metazoa</taxon>
        <taxon>Chordata</taxon>
        <taxon>Craniata</taxon>
        <taxon>Vertebrata</taxon>
        <taxon>Euteleostomi</taxon>
        <taxon>Actinopterygii</taxon>
        <taxon>Neopterygii</taxon>
        <taxon>Teleostei</taxon>
        <taxon>Ostariophysi</taxon>
        <taxon>Cypriniformes</taxon>
        <taxon>Danionidae</taxon>
        <taxon>Danioninae</taxon>
        <taxon>Devario</taxon>
    </lineage>
</organism>
<reference key="1">
    <citation type="journal article" date="1996" name="Neurochem. Res.">
        <title>Genes encoding giant danio and golden shiner ependymin.</title>
        <authorList>
            <person name="Adams D.S."/>
            <person name="Kiyokawa M."/>
            <person name="Getman M.E."/>
            <person name="Shashoua V.E."/>
        </authorList>
    </citation>
    <scope>NUCLEOTIDE SEQUENCE [GENOMIC DNA]</scope>
    <source>
        <tissue>Brain</tissue>
    </source>
</reference>
<protein>
    <recommendedName>
        <fullName>Ependymin</fullName>
        <shortName>EPD</shortName>
    </recommendedName>
</protein>
<gene>
    <name type="primary">epd</name>
</gene>
<feature type="signal peptide" evidence="2">
    <location>
        <begin position="1"/>
        <end position="20"/>
    </location>
</feature>
<feature type="chain" id="PRO_0000008345" description="Ependymin">
    <location>
        <begin position="21"/>
        <end position="218"/>
    </location>
</feature>
<feature type="glycosylation site" description="N-linked (GlcNAc...) asparagine" evidence="2">
    <location>
        <position position="74"/>
    </location>
</feature>
<feature type="glycosylation site" description="N-linked (GlcNAc...) asparagine" evidence="2">
    <location>
        <position position="97"/>
    </location>
</feature>
<sequence length="218" mass="24479">MHTVKLLCVVFSCLCAVAWGSSHVSNRQPCHSPQLTSGTMKVISTGGHDLASGEFNYDSKANKFRFVEDTTHANKTSYMDVLVHFEEGVLYEIDSKNESCKKETLQFRKHLMEIPPDATHESEIYMGSPSITEQGLRVRVWNGKLPELHAHYSLSTTSCGCLPVSGSYYGEKKDLFFSFFGVETEVDDPQVFVPPAYCEGVSFEEAPDDHSFFDLFHD</sequence>
<proteinExistence type="inferred from homology"/>
<evidence type="ECO:0000250" key="1"/>
<evidence type="ECO:0000255" key="2"/>
<evidence type="ECO:0000305" key="3"/>